<name>COAA_BRUSI</name>
<feature type="chain" id="PRO_1000078053" description="Pantothenate kinase">
    <location>
        <begin position="1"/>
        <end position="322"/>
    </location>
</feature>
<feature type="binding site" evidence="1">
    <location>
        <begin position="100"/>
        <end position="107"/>
    </location>
    <ligand>
        <name>ATP</name>
        <dbReference type="ChEBI" id="CHEBI:30616"/>
    </ligand>
</feature>
<reference key="1">
    <citation type="submission" date="2007-12" db="EMBL/GenBank/DDBJ databases">
        <title>Brucella suis ATCC 23445 whole genome shotgun sequencing project.</title>
        <authorList>
            <person name="Setubal J.C."/>
            <person name="Bowns C."/>
            <person name="Boyle S."/>
            <person name="Crasta O.R."/>
            <person name="Czar M.J."/>
            <person name="Dharmanolla C."/>
            <person name="Gillespie J.J."/>
            <person name="Kenyon R.W."/>
            <person name="Lu J."/>
            <person name="Mane S."/>
            <person name="Mohapatra S."/>
            <person name="Nagrani S."/>
            <person name="Purkayastha A."/>
            <person name="Rajasimha H.K."/>
            <person name="Shallom J.M."/>
            <person name="Shallom S."/>
            <person name="Shukla M."/>
            <person name="Snyder E.E."/>
            <person name="Sobral B.W."/>
            <person name="Wattam A.R."/>
            <person name="Will R."/>
            <person name="Williams K."/>
            <person name="Yoo H."/>
            <person name="Bruce D."/>
            <person name="Detter C."/>
            <person name="Munk C."/>
            <person name="Brettin T.S."/>
        </authorList>
    </citation>
    <scope>NUCLEOTIDE SEQUENCE [LARGE SCALE GENOMIC DNA]</scope>
    <source>
        <strain>ATCC 23445 / NCTC 10510</strain>
    </source>
</reference>
<keyword id="KW-0067">ATP-binding</keyword>
<keyword id="KW-0173">Coenzyme A biosynthesis</keyword>
<keyword id="KW-0963">Cytoplasm</keyword>
<keyword id="KW-0418">Kinase</keyword>
<keyword id="KW-0547">Nucleotide-binding</keyword>
<keyword id="KW-0808">Transferase</keyword>
<organism>
    <name type="scientific">Brucella suis (strain ATCC 23445 / NCTC 10510)</name>
    <dbReference type="NCBI Taxonomy" id="470137"/>
    <lineage>
        <taxon>Bacteria</taxon>
        <taxon>Pseudomonadati</taxon>
        <taxon>Pseudomonadota</taxon>
        <taxon>Alphaproteobacteria</taxon>
        <taxon>Hyphomicrobiales</taxon>
        <taxon>Brucellaceae</taxon>
        <taxon>Brucella/Ochrobactrum group</taxon>
        <taxon>Brucella</taxon>
    </lineage>
</organism>
<protein>
    <recommendedName>
        <fullName evidence="1">Pantothenate kinase</fullName>
        <ecNumber evidence="1">2.7.1.33</ecNumber>
    </recommendedName>
    <alternativeName>
        <fullName evidence="1">Pantothenic acid kinase</fullName>
    </alternativeName>
</protein>
<comment type="catalytic activity">
    <reaction evidence="1">
        <text>(R)-pantothenate + ATP = (R)-4'-phosphopantothenate + ADP + H(+)</text>
        <dbReference type="Rhea" id="RHEA:16373"/>
        <dbReference type="ChEBI" id="CHEBI:10986"/>
        <dbReference type="ChEBI" id="CHEBI:15378"/>
        <dbReference type="ChEBI" id="CHEBI:29032"/>
        <dbReference type="ChEBI" id="CHEBI:30616"/>
        <dbReference type="ChEBI" id="CHEBI:456216"/>
        <dbReference type="EC" id="2.7.1.33"/>
    </reaction>
</comment>
<comment type="pathway">
    <text evidence="1">Cofactor biosynthesis; coenzyme A biosynthesis; CoA from (R)-pantothenate: step 1/5.</text>
</comment>
<comment type="subcellular location">
    <subcellularLocation>
        <location evidence="1">Cytoplasm</location>
    </subcellularLocation>
</comment>
<comment type="similarity">
    <text evidence="1">Belongs to the prokaryotic pantothenate kinase family.</text>
</comment>
<dbReference type="EC" id="2.7.1.33" evidence="1"/>
<dbReference type="EMBL" id="CP000911">
    <property type="protein sequence ID" value="ABY38940.1"/>
    <property type="molecule type" value="Genomic_DNA"/>
</dbReference>
<dbReference type="RefSeq" id="WP_004684544.1">
    <property type="nucleotide sequence ID" value="NC_010169.1"/>
</dbReference>
<dbReference type="SMR" id="B0CJI8"/>
<dbReference type="GeneID" id="97534650"/>
<dbReference type="KEGG" id="bmt:BSUIS_A1929"/>
<dbReference type="HOGENOM" id="CLU_053818_1_1_5"/>
<dbReference type="UniPathway" id="UPA00241">
    <property type="reaction ID" value="UER00352"/>
</dbReference>
<dbReference type="Proteomes" id="UP000008545">
    <property type="component" value="Chromosome I"/>
</dbReference>
<dbReference type="GO" id="GO:0005737">
    <property type="term" value="C:cytoplasm"/>
    <property type="evidence" value="ECO:0007669"/>
    <property type="project" value="UniProtKB-SubCell"/>
</dbReference>
<dbReference type="GO" id="GO:0005524">
    <property type="term" value="F:ATP binding"/>
    <property type="evidence" value="ECO:0007669"/>
    <property type="project" value="UniProtKB-UniRule"/>
</dbReference>
<dbReference type="GO" id="GO:0004594">
    <property type="term" value="F:pantothenate kinase activity"/>
    <property type="evidence" value="ECO:0007669"/>
    <property type="project" value="UniProtKB-UniRule"/>
</dbReference>
<dbReference type="GO" id="GO:0015937">
    <property type="term" value="P:coenzyme A biosynthetic process"/>
    <property type="evidence" value="ECO:0007669"/>
    <property type="project" value="UniProtKB-UniRule"/>
</dbReference>
<dbReference type="CDD" id="cd02025">
    <property type="entry name" value="PanK"/>
    <property type="match status" value="1"/>
</dbReference>
<dbReference type="Gene3D" id="3.40.50.300">
    <property type="entry name" value="P-loop containing nucleotide triphosphate hydrolases"/>
    <property type="match status" value="1"/>
</dbReference>
<dbReference type="HAMAP" id="MF_00215">
    <property type="entry name" value="Pantothen_kinase_1"/>
    <property type="match status" value="1"/>
</dbReference>
<dbReference type="InterPro" id="IPR027417">
    <property type="entry name" value="P-loop_NTPase"/>
</dbReference>
<dbReference type="InterPro" id="IPR004566">
    <property type="entry name" value="PanK"/>
</dbReference>
<dbReference type="InterPro" id="IPR006083">
    <property type="entry name" value="PRK/URK"/>
</dbReference>
<dbReference type="NCBIfam" id="TIGR00554">
    <property type="entry name" value="panK_bact"/>
    <property type="match status" value="1"/>
</dbReference>
<dbReference type="PANTHER" id="PTHR10285">
    <property type="entry name" value="URIDINE KINASE"/>
    <property type="match status" value="1"/>
</dbReference>
<dbReference type="Pfam" id="PF00485">
    <property type="entry name" value="PRK"/>
    <property type="match status" value="1"/>
</dbReference>
<dbReference type="PIRSF" id="PIRSF000545">
    <property type="entry name" value="Pantothenate_kin"/>
    <property type="match status" value="1"/>
</dbReference>
<dbReference type="SUPFAM" id="SSF52540">
    <property type="entry name" value="P-loop containing nucleoside triphosphate hydrolases"/>
    <property type="match status" value="1"/>
</dbReference>
<sequence length="322" mass="37477">MWEKVDQLTPSRYSPYRFFSAQEWAAFRADTPLTLTYEEVKRLRSLGDPIDLDEVRRIYLSLSRLLYAHVEASQLLFRQRQQFLNMEESYKTPFIIGVAGSVAVGKSTMARILKELLARWPSSPKVDLVTTDGFLYPNAVLREQNMMERKGFPESYDIGAVLRFLSAIKAGMSRVRAPLYSHLSYDVLPGEYQIVDKPDILIFEGINVLQVRDLPEDGKMVPFVSDFFDFSIYIDADPRLIHKWYIDRFMRLRETAFRDPQSFFHRYSQLSQEAARSIAEGLWQNINLKNLNENILPTRPRADLILRKGSDHLIEEVALRKI</sequence>
<evidence type="ECO:0000255" key="1">
    <source>
        <dbReference type="HAMAP-Rule" id="MF_00215"/>
    </source>
</evidence>
<proteinExistence type="inferred from homology"/>
<accession>B0CJI8</accession>
<gene>
    <name evidence="1" type="primary">coaA</name>
    <name type="ordered locus">BSUIS_A1929</name>
</gene>